<sequence>MYTHMEYLQRCFYKSTSWNEDNIYANVTATSQALLDFSIPSGAKLDVSTQATDHSASSMSLSNMHTINGSLAYLFSSTPLKNTMGTRDVSLQDAVAGFRIIEPFFSGTHTKTDSSDVNRASLLYGRMYFPGTALEAMLIKRISASAQLLVKCINNPHIRKGGTMIVYLQENTPRFSREYIYSTNEALFGFRCLYNFGKPTKISPALIPKFDNSVVSVGAEFWYAALGMSPGLSTAVRYSTRSTSTGKPLTMTLACNPILGHISSTYNVKTSVSSTVCSKYDFNWFSYASNLSIGFELYNFFKPSHVFKHYHADQRRNPSIHHDTLAPVADPYVLGTRPTNNSVSYAFPEKPRKRVVNSIQNLDDYYHINPSRLHRSPAYDVDDDVSGRSVMEAFQNSVNESNFSSVLKGSTSLSDRMVKLLWVGRYKDFLVSTGIKVNLNPFTNLPEINKIGVTFSYAC</sequence>
<organism>
    <name type="scientific">Clavispora lusitaniae (strain ATCC 42720)</name>
    <name type="common">Yeast</name>
    <name type="synonym">Candida lusitaniae</name>
    <dbReference type="NCBI Taxonomy" id="306902"/>
    <lineage>
        <taxon>Eukaryota</taxon>
        <taxon>Fungi</taxon>
        <taxon>Dikarya</taxon>
        <taxon>Ascomycota</taxon>
        <taxon>Saccharomycotina</taxon>
        <taxon>Pichiomycetes</taxon>
        <taxon>Metschnikowiaceae</taxon>
        <taxon>Clavispora</taxon>
    </lineage>
</organism>
<proteinExistence type="inferred from homology"/>
<gene>
    <name evidence="1" type="primary">MDM10</name>
    <name type="ORF">CLUG_00041</name>
</gene>
<dbReference type="EMBL" id="CH408076">
    <property type="protein sequence ID" value="EEQ35918.1"/>
    <property type="molecule type" value="Genomic_DNA"/>
</dbReference>
<dbReference type="RefSeq" id="XP_002618882.1">
    <property type="nucleotide sequence ID" value="XM_002618836.1"/>
</dbReference>
<dbReference type="SMR" id="C4XVQ6"/>
<dbReference type="FunCoup" id="C4XVQ6">
    <property type="interactions" value="67"/>
</dbReference>
<dbReference type="STRING" id="306902.C4XVQ6"/>
<dbReference type="GeneID" id="8500611"/>
<dbReference type="KEGG" id="clu:CLUG_00041"/>
<dbReference type="VEuPathDB" id="FungiDB:CLUG_00041"/>
<dbReference type="HOGENOM" id="CLU_026505_0_0_1"/>
<dbReference type="InParanoid" id="C4XVQ6"/>
<dbReference type="OMA" id="VPGYRQI"/>
<dbReference type="OrthoDB" id="15704at4891"/>
<dbReference type="Proteomes" id="UP000007703">
    <property type="component" value="Unassembled WGS sequence"/>
</dbReference>
<dbReference type="GO" id="GO:0032865">
    <property type="term" value="C:ERMES complex"/>
    <property type="evidence" value="ECO:0007669"/>
    <property type="project" value="UniProtKB-UniRule"/>
</dbReference>
<dbReference type="GO" id="GO:0001401">
    <property type="term" value="C:SAM complex"/>
    <property type="evidence" value="ECO:0007669"/>
    <property type="project" value="TreeGrafter"/>
</dbReference>
<dbReference type="GO" id="GO:0051654">
    <property type="term" value="P:establishment of mitochondrion localization"/>
    <property type="evidence" value="ECO:0007669"/>
    <property type="project" value="TreeGrafter"/>
</dbReference>
<dbReference type="GO" id="GO:0000002">
    <property type="term" value="P:mitochondrial genome maintenance"/>
    <property type="evidence" value="ECO:0007669"/>
    <property type="project" value="UniProtKB-UniRule"/>
</dbReference>
<dbReference type="GO" id="GO:0070096">
    <property type="term" value="P:mitochondrial outer membrane translocase complex assembly"/>
    <property type="evidence" value="ECO:0007669"/>
    <property type="project" value="UniProtKB-UniRule"/>
</dbReference>
<dbReference type="GO" id="GO:1990456">
    <property type="term" value="P:mitochondrion-endoplasmic reticulum membrane tethering"/>
    <property type="evidence" value="ECO:0007669"/>
    <property type="project" value="UniProtKB-UniRule"/>
</dbReference>
<dbReference type="GO" id="GO:0015914">
    <property type="term" value="P:phospholipid transport"/>
    <property type="evidence" value="ECO:0007669"/>
    <property type="project" value="TreeGrafter"/>
</dbReference>
<dbReference type="GO" id="GO:0045040">
    <property type="term" value="P:protein insertion into mitochondrial outer membrane"/>
    <property type="evidence" value="ECO:0007669"/>
    <property type="project" value="UniProtKB-UniRule"/>
</dbReference>
<dbReference type="HAMAP" id="MF_03102">
    <property type="entry name" value="Mdm10"/>
    <property type="match status" value="1"/>
</dbReference>
<dbReference type="InterPro" id="IPR027539">
    <property type="entry name" value="Mdm10"/>
</dbReference>
<dbReference type="PANTHER" id="PTHR28035">
    <property type="entry name" value="MITOCHONDRIAL DISTRIBUTION AND MORPHOLOGY PROTEIN 10"/>
    <property type="match status" value="1"/>
</dbReference>
<dbReference type="PANTHER" id="PTHR28035:SF1">
    <property type="entry name" value="MITOCHONDRIAL DISTRIBUTION AND MORPHOLOGY PROTEIN 10"/>
    <property type="match status" value="1"/>
</dbReference>
<dbReference type="Pfam" id="PF12519">
    <property type="entry name" value="MDM10"/>
    <property type="match status" value="1"/>
</dbReference>
<name>MDM10_CLAL4</name>
<protein>
    <recommendedName>
        <fullName evidence="1">Mitochondrial distribution and morphology protein 10</fullName>
    </recommendedName>
    <alternativeName>
        <fullName evidence="1">Mitochondrial inheritance component MDM10</fullName>
    </alternativeName>
</protein>
<keyword id="KW-0472">Membrane</keyword>
<keyword id="KW-0496">Mitochondrion</keyword>
<keyword id="KW-1000">Mitochondrion outer membrane</keyword>
<keyword id="KW-1185">Reference proteome</keyword>
<keyword id="KW-0812">Transmembrane</keyword>
<keyword id="KW-1134">Transmembrane beta strand</keyword>
<feature type="chain" id="PRO_0000384174" description="Mitochondrial distribution and morphology protein 10">
    <location>
        <begin position="1"/>
        <end position="459"/>
    </location>
</feature>
<comment type="function">
    <text evidence="1">Component of the ERMES/MDM complex, which serves as a molecular tether to connect the endoplasmic reticulum and mitochondria. Components of this complex are involved in the control of mitochondrial shape and protein biogenesis and may function in phospholipid exchange. MDM10 is involved in the late assembly steps of the general translocase of the mitochondrial outer membrane (TOM complex). Functions in the TOM40-specific route of the assembly of outer membrane beta-barrel proteins, including the association of TOM40 with the receptor TOM22 and small TOM proteins. Can associate with the SAM(core) complex as well as the MDM12-MMM1 complex, both involved in late steps of the major beta-barrel assembly pathway, that is responsible for biogenesis of all outer membrane beta-barrel proteins. May act as a switch that shuttles between both complexes and channels precursor proteins into the TOM40-specific pathway. Plays a role in mitochondrial morphology and in the inheritance of mitochondria.</text>
</comment>
<comment type="subunit">
    <text evidence="1">Component of the ER-mitochondria encounter structure (ERMES) or MDM complex, composed of MMM1, MDM10, MDM12 and MDM34. Associates with the mitochondrial outer membrane sorting assembly machinery SAM(core) complex.</text>
</comment>
<comment type="subcellular location">
    <subcellularLocation>
        <location evidence="1">Mitochondrion outer membrane</location>
        <topology evidence="1">Multi-pass membrane protein</topology>
    </subcellularLocation>
    <text evidence="1">The ERMES/MDM complex localizes to a few discrete foci (around 10 per single cell), that represent mitochondria-endoplasmic reticulum junctions. These foci are often found next to mtDNA nucleoids.</text>
</comment>
<comment type="domain">
    <text>Lacks alpha-helical transmembrane segments, suggesting that it resides in the membrane via beta-sheet conformations similar to those predicted for other outer membrane proteins and porin.</text>
</comment>
<comment type="similarity">
    <text evidence="1">Belongs to the MDM10 family.</text>
</comment>
<accession>C4XVQ6</accession>
<evidence type="ECO:0000255" key="1">
    <source>
        <dbReference type="HAMAP-Rule" id="MF_03102"/>
    </source>
</evidence>
<reference key="1">
    <citation type="journal article" date="2009" name="Nature">
        <title>Evolution of pathogenicity and sexual reproduction in eight Candida genomes.</title>
        <authorList>
            <person name="Butler G."/>
            <person name="Rasmussen M.D."/>
            <person name="Lin M.F."/>
            <person name="Santos M.A.S."/>
            <person name="Sakthikumar S."/>
            <person name="Munro C.A."/>
            <person name="Rheinbay E."/>
            <person name="Grabherr M."/>
            <person name="Forche A."/>
            <person name="Reedy J.L."/>
            <person name="Agrafioti I."/>
            <person name="Arnaud M.B."/>
            <person name="Bates S."/>
            <person name="Brown A.J.P."/>
            <person name="Brunke S."/>
            <person name="Costanzo M.C."/>
            <person name="Fitzpatrick D.A."/>
            <person name="de Groot P.W.J."/>
            <person name="Harris D."/>
            <person name="Hoyer L.L."/>
            <person name="Hube B."/>
            <person name="Klis F.M."/>
            <person name="Kodira C."/>
            <person name="Lennard N."/>
            <person name="Logue M.E."/>
            <person name="Martin R."/>
            <person name="Neiman A.M."/>
            <person name="Nikolaou E."/>
            <person name="Quail M.A."/>
            <person name="Quinn J."/>
            <person name="Santos M.C."/>
            <person name="Schmitzberger F.F."/>
            <person name="Sherlock G."/>
            <person name="Shah P."/>
            <person name="Silverstein K.A.T."/>
            <person name="Skrzypek M.S."/>
            <person name="Soll D."/>
            <person name="Staggs R."/>
            <person name="Stansfield I."/>
            <person name="Stumpf M.P.H."/>
            <person name="Sudbery P.E."/>
            <person name="Srikantha T."/>
            <person name="Zeng Q."/>
            <person name="Berman J."/>
            <person name="Berriman M."/>
            <person name="Heitman J."/>
            <person name="Gow N.A.R."/>
            <person name="Lorenz M.C."/>
            <person name="Birren B.W."/>
            <person name="Kellis M."/>
            <person name="Cuomo C.A."/>
        </authorList>
    </citation>
    <scope>NUCLEOTIDE SEQUENCE [LARGE SCALE GENOMIC DNA]</scope>
    <source>
        <strain>ATCC 42720</strain>
    </source>
</reference>